<protein>
    <recommendedName>
        <fullName evidence="1">Transcriptional repressor NrdR</fullName>
    </recommendedName>
</protein>
<accession>Q5SM09</accession>
<feature type="chain" id="PRO_0000230903" description="Transcriptional repressor NrdR">
    <location>
        <begin position="1"/>
        <end position="153"/>
    </location>
</feature>
<feature type="domain" description="ATP-cone" evidence="1">
    <location>
        <begin position="49"/>
        <end position="136"/>
    </location>
</feature>
<feature type="zinc finger region" evidence="1">
    <location>
        <begin position="3"/>
        <end position="34"/>
    </location>
</feature>
<organism>
    <name type="scientific">Thermus thermophilus (strain ATCC 27634 / DSM 579 / HB8)</name>
    <dbReference type="NCBI Taxonomy" id="300852"/>
    <lineage>
        <taxon>Bacteria</taxon>
        <taxon>Thermotogati</taxon>
        <taxon>Deinococcota</taxon>
        <taxon>Deinococci</taxon>
        <taxon>Thermales</taxon>
        <taxon>Thermaceae</taxon>
        <taxon>Thermus</taxon>
    </lineage>
</organism>
<proteinExistence type="inferred from homology"/>
<sequence>MKCPYCGHPDTRVVDSRPSDEGMAIRRRRECPSCGRRFTTYERTQLEPLMVVKRDGRKEPFNPDKLLRGLLLACEKRPVSEEVLRRFAYTFEDQVSGPEITSEEIGLKALAFLKELDHVAYIRFASVYREFDSVERFIEEIRSLASLDKKEGD</sequence>
<dbReference type="EMBL" id="AP008226">
    <property type="protein sequence ID" value="BAD69957.1"/>
    <property type="molecule type" value="Genomic_DNA"/>
</dbReference>
<dbReference type="RefSeq" id="WP_011174215.1">
    <property type="nucleotide sequence ID" value="NC_006461.1"/>
</dbReference>
<dbReference type="RefSeq" id="YP_143400.1">
    <property type="nucleotide sequence ID" value="NC_006461.1"/>
</dbReference>
<dbReference type="SMR" id="Q5SM09"/>
<dbReference type="EnsemblBacteria" id="BAD69957">
    <property type="protein sequence ID" value="BAD69957"/>
    <property type="gene ID" value="BAD69957"/>
</dbReference>
<dbReference type="GeneID" id="3168689"/>
<dbReference type="KEGG" id="ttj:TTHA0134"/>
<dbReference type="PATRIC" id="fig|300852.9.peg.132"/>
<dbReference type="eggNOG" id="COG1327">
    <property type="taxonomic scope" value="Bacteria"/>
</dbReference>
<dbReference type="HOGENOM" id="CLU_108412_1_0_0"/>
<dbReference type="PhylomeDB" id="Q5SM09"/>
<dbReference type="Proteomes" id="UP000000532">
    <property type="component" value="Chromosome"/>
</dbReference>
<dbReference type="GO" id="GO:0005524">
    <property type="term" value="F:ATP binding"/>
    <property type="evidence" value="ECO:0007669"/>
    <property type="project" value="UniProtKB-KW"/>
</dbReference>
<dbReference type="GO" id="GO:0003677">
    <property type="term" value="F:DNA binding"/>
    <property type="evidence" value="ECO:0007669"/>
    <property type="project" value="UniProtKB-KW"/>
</dbReference>
<dbReference type="GO" id="GO:0008270">
    <property type="term" value="F:zinc ion binding"/>
    <property type="evidence" value="ECO:0007669"/>
    <property type="project" value="UniProtKB-UniRule"/>
</dbReference>
<dbReference type="GO" id="GO:0045892">
    <property type="term" value="P:negative regulation of DNA-templated transcription"/>
    <property type="evidence" value="ECO:0007669"/>
    <property type="project" value="UniProtKB-UniRule"/>
</dbReference>
<dbReference type="HAMAP" id="MF_00440">
    <property type="entry name" value="NrdR"/>
    <property type="match status" value="1"/>
</dbReference>
<dbReference type="InterPro" id="IPR005144">
    <property type="entry name" value="ATP-cone_dom"/>
</dbReference>
<dbReference type="InterPro" id="IPR055173">
    <property type="entry name" value="NrdR-like_N"/>
</dbReference>
<dbReference type="InterPro" id="IPR003796">
    <property type="entry name" value="RNR_NrdR-like"/>
</dbReference>
<dbReference type="NCBIfam" id="TIGR00244">
    <property type="entry name" value="transcriptional regulator NrdR"/>
    <property type="match status" value="1"/>
</dbReference>
<dbReference type="PANTHER" id="PTHR30455">
    <property type="entry name" value="TRANSCRIPTIONAL REPRESSOR NRDR"/>
    <property type="match status" value="1"/>
</dbReference>
<dbReference type="PANTHER" id="PTHR30455:SF2">
    <property type="entry name" value="TRANSCRIPTIONAL REPRESSOR NRDR"/>
    <property type="match status" value="1"/>
</dbReference>
<dbReference type="Pfam" id="PF03477">
    <property type="entry name" value="ATP-cone"/>
    <property type="match status" value="1"/>
</dbReference>
<dbReference type="Pfam" id="PF22811">
    <property type="entry name" value="Zn_ribbon_NrdR"/>
    <property type="match status" value="1"/>
</dbReference>
<dbReference type="PROSITE" id="PS51161">
    <property type="entry name" value="ATP_CONE"/>
    <property type="match status" value="1"/>
</dbReference>
<name>NRDR_THET8</name>
<reference key="1">
    <citation type="submission" date="2004-11" db="EMBL/GenBank/DDBJ databases">
        <title>Complete genome sequence of Thermus thermophilus HB8.</title>
        <authorList>
            <person name="Masui R."/>
            <person name="Kurokawa K."/>
            <person name="Nakagawa N."/>
            <person name="Tokunaga F."/>
            <person name="Koyama Y."/>
            <person name="Shibata T."/>
            <person name="Oshima T."/>
            <person name="Yokoyama S."/>
            <person name="Yasunaga T."/>
            <person name="Kuramitsu S."/>
        </authorList>
    </citation>
    <scope>NUCLEOTIDE SEQUENCE [LARGE SCALE GENOMIC DNA]</scope>
    <source>
        <strain>ATCC 27634 / DSM 579 / HB8</strain>
    </source>
</reference>
<comment type="function">
    <text evidence="1">Negatively regulates transcription of bacterial ribonucleotide reductase nrd genes and operons by binding to NrdR-boxes.</text>
</comment>
<comment type="cofactor">
    <cofactor evidence="1">
        <name>Zn(2+)</name>
        <dbReference type="ChEBI" id="CHEBI:29105"/>
    </cofactor>
    <text evidence="1">Binds 1 zinc ion.</text>
</comment>
<comment type="similarity">
    <text evidence="1">Belongs to the NrdR family.</text>
</comment>
<keyword id="KW-0067">ATP-binding</keyword>
<keyword id="KW-0238">DNA-binding</keyword>
<keyword id="KW-0479">Metal-binding</keyword>
<keyword id="KW-0547">Nucleotide-binding</keyword>
<keyword id="KW-1185">Reference proteome</keyword>
<keyword id="KW-0678">Repressor</keyword>
<keyword id="KW-0804">Transcription</keyword>
<keyword id="KW-0805">Transcription regulation</keyword>
<keyword id="KW-0862">Zinc</keyword>
<keyword id="KW-0863">Zinc-finger</keyword>
<gene>
    <name evidence="1" type="primary">nrdR</name>
    <name type="ordered locus">TTHA0134</name>
</gene>
<evidence type="ECO:0000255" key="1">
    <source>
        <dbReference type="HAMAP-Rule" id="MF_00440"/>
    </source>
</evidence>